<sequence length="147" mass="16262">MAKEIVRKAKLQFPAGQAKPGPALAGVGINMPEFTKAFNDQTRDRGQEPVPVLITVYKDKSFEFKLFTSPTAYKLTQIAKIKKGSSKANKEKVATITLDQLKEIAEYKLPDLNTNNIDSAMRQIAGTAKQMGIEIEGYAEWLKKGTN</sequence>
<name>RL11_META1</name>
<evidence type="ECO:0000255" key="1">
    <source>
        <dbReference type="HAMAP-Rule" id="MF_00736"/>
    </source>
</evidence>
<evidence type="ECO:0000305" key="2"/>
<gene>
    <name evidence="1" type="primary">rplK</name>
    <name type="ordered locus">MARTH_orf144</name>
</gene>
<protein>
    <recommendedName>
        <fullName evidence="1">Large ribosomal subunit protein uL11</fullName>
    </recommendedName>
    <alternativeName>
        <fullName evidence="2">50S ribosomal protein L11</fullName>
    </alternativeName>
</protein>
<keyword id="KW-0488">Methylation</keyword>
<keyword id="KW-1185">Reference proteome</keyword>
<keyword id="KW-0687">Ribonucleoprotein</keyword>
<keyword id="KW-0689">Ribosomal protein</keyword>
<keyword id="KW-0694">RNA-binding</keyword>
<keyword id="KW-0699">rRNA-binding</keyword>
<feature type="chain" id="PRO_1000195677" description="Large ribosomal subunit protein uL11">
    <location>
        <begin position="1"/>
        <end position="147"/>
    </location>
</feature>
<reference key="1">
    <citation type="journal article" date="2008" name="Infect. Immun.">
        <title>Genome of Mycoplasma arthritidis.</title>
        <authorList>
            <person name="Dybvig K."/>
            <person name="Zuhua C."/>
            <person name="Lao P."/>
            <person name="Jordan D.S."/>
            <person name="French C.T."/>
            <person name="Tu A.H."/>
            <person name="Loraine A.E."/>
        </authorList>
    </citation>
    <scope>NUCLEOTIDE SEQUENCE [LARGE SCALE GENOMIC DNA]</scope>
    <source>
        <strain>158L3-1</strain>
    </source>
</reference>
<comment type="function">
    <text evidence="1">Forms part of the ribosomal stalk which helps the ribosome interact with GTP-bound translation factors.</text>
</comment>
<comment type="subunit">
    <text evidence="1">Part of the ribosomal stalk of the 50S ribosomal subunit. Interacts with L10 and the large rRNA to form the base of the stalk. L10 forms an elongated spine to which L12 dimers bind in a sequential fashion forming a multimeric L10(L12)X complex.</text>
</comment>
<comment type="PTM">
    <text evidence="1">One or more lysine residues are methylated.</text>
</comment>
<comment type="similarity">
    <text evidence="1">Belongs to the universal ribosomal protein uL11 family.</text>
</comment>
<organism>
    <name type="scientific">Metamycoplasma arthritidis (strain 158L3-1)</name>
    <name type="common">Mycoplasma arthritidis</name>
    <dbReference type="NCBI Taxonomy" id="243272"/>
    <lineage>
        <taxon>Bacteria</taxon>
        <taxon>Bacillati</taxon>
        <taxon>Mycoplasmatota</taxon>
        <taxon>Mycoplasmoidales</taxon>
        <taxon>Metamycoplasmataceae</taxon>
        <taxon>Metamycoplasma</taxon>
    </lineage>
</organism>
<dbReference type="EMBL" id="CP001047">
    <property type="protein sequence ID" value="ACF07080.1"/>
    <property type="molecule type" value="Genomic_DNA"/>
</dbReference>
<dbReference type="RefSeq" id="WP_012498037.1">
    <property type="nucleotide sequence ID" value="NC_011025.1"/>
</dbReference>
<dbReference type="SMR" id="B3PM28"/>
<dbReference type="STRING" id="243272.MARTH_orf144"/>
<dbReference type="KEGG" id="mat:MARTH_orf144"/>
<dbReference type="eggNOG" id="COG0080">
    <property type="taxonomic scope" value="Bacteria"/>
</dbReference>
<dbReference type="HOGENOM" id="CLU_074237_2_2_14"/>
<dbReference type="Proteomes" id="UP000008812">
    <property type="component" value="Chromosome"/>
</dbReference>
<dbReference type="GO" id="GO:0022625">
    <property type="term" value="C:cytosolic large ribosomal subunit"/>
    <property type="evidence" value="ECO:0007669"/>
    <property type="project" value="TreeGrafter"/>
</dbReference>
<dbReference type="GO" id="GO:0070180">
    <property type="term" value="F:large ribosomal subunit rRNA binding"/>
    <property type="evidence" value="ECO:0007669"/>
    <property type="project" value="UniProtKB-UniRule"/>
</dbReference>
<dbReference type="GO" id="GO:0003735">
    <property type="term" value="F:structural constituent of ribosome"/>
    <property type="evidence" value="ECO:0007669"/>
    <property type="project" value="InterPro"/>
</dbReference>
<dbReference type="GO" id="GO:0006412">
    <property type="term" value="P:translation"/>
    <property type="evidence" value="ECO:0007669"/>
    <property type="project" value="UniProtKB-UniRule"/>
</dbReference>
<dbReference type="CDD" id="cd00349">
    <property type="entry name" value="Ribosomal_L11"/>
    <property type="match status" value="1"/>
</dbReference>
<dbReference type="FunFam" id="1.10.10.250:FF:000001">
    <property type="entry name" value="50S ribosomal protein L11"/>
    <property type="match status" value="1"/>
</dbReference>
<dbReference type="Gene3D" id="1.10.10.250">
    <property type="entry name" value="Ribosomal protein L11, C-terminal domain"/>
    <property type="match status" value="1"/>
</dbReference>
<dbReference type="Gene3D" id="3.30.1550.10">
    <property type="entry name" value="Ribosomal protein L11/L12, N-terminal domain"/>
    <property type="match status" value="1"/>
</dbReference>
<dbReference type="HAMAP" id="MF_00736">
    <property type="entry name" value="Ribosomal_uL11"/>
    <property type="match status" value="1"/>
</dbReference>
<dbReference type="InterPro" id="IPR000911">
    <property type="entry name" value="Ribosomal_uL11"/>
</dbReference>
<dbReference type="InterPro" id="IPR006519">
    <property type="entry name" value="Ribosomal_uL11_bac-typ"/>
</dbReference>
<dbReference type="InterPro" id="IPR020783">
    <property type="entry name" value="Ribosomal_uL11_C"/>
</dbReference>
<dbReference type="InterPro" id="IPR036769">
    <property type="entry name" value="Ribosomal_uL11_C_sf"/>
</dbReference>
<dbReference type="InterPro" id="IPR020785">
    <property type="entry name" value="Ribosomal_uL11_CS"/>
</dbReference>
<dbReference type="InterPro" id="IPR020784">
    <property type="entry name" value="Ribosomal_uL11_N"/>
</dbReference>
<dbReference type="InterPro" id="IPR036796">
    <property type="entry name" value="Ribosomal_uL11_N_sf"/>
</dbReference>
<dbReference type="NCBIfam" id="TIGR01632">
    <property type="entry name" value="L11_bact"/>
    <property type="match status" value="1"/>
</dbReference>
<dbReference type="PANTHER" id="PTHR11661">
    <property type="entry name" value="60S RIBOSOMAL PROTEIN L12"/>
    <property type="match status" value="1"/>
</dbReference>
<dbReference type="PANTHER" id="PTHR11661:SF1">
    <property type="entry name" value="LARGE RIBOSOMAL SUBUNIT PROTEIN UL11M"/>
    <property type="match status" value="1"/>
</dbReference>
<dbReference type="Pfam" id="PF00298">
    <property type="entry name" value="Ribosomal_L11"/>
    <property type="match status" value="1"/>
</dbReference>
<dbReference type="Pfam" id="PF03946">
    <property type="entry name" value="Ribosomal_L11_N"/>
    <property type="match status" value="1"/>
</dbReference>
<dbReference type="SMART" id="SM00649">
    <property type="entry name" value="RL11"/>
    <property type="match status" value="1"/>
</dbReference>
<dbReference type="SUPFAM" id="SSF54747">
    <property type="entry name" value="Ribosomal L11/L12e N-terminal domain"/>
    <property type="match status" value="1"/>
</dbReference>
<dbReference type="SUPFAM" id="SSF46906">
    <property type="entry name" value="Ribosomal protein L11, C-terminal domain"/>
    <property type="match status" value="1"/>
</dbReference>
<dbReference type="PROSITE" id="PS00359">
    <property type="entry name" value="RIBOSOMAL_L11"/>
    <property type="match status" value="1"/>
</dbReference>
<proteinExistence type="inferred from homology"/>
<accession>B3PM28</accession>